<evidence type="ECO:0000255" key="1"/>
<evidence type="ECO:0000305" key="2"/>
<reference key="1">
    <citation type="journal article" date="2004" name="Genome Res.">
        <title>The status, quality, and expansion of the NIH full-length cDNA project: the Mammalian Gene Collection (MGC).</title>
        <authorList>
            <consortium name="The MGC Project Team"/>
        </authorList>
    </citation>
    <scope>NUCLEOTIDE SEQUENCE [LARGE SCALE MRNA]</scope>
    <source>
        <tissue>Prostate</tissue>
    </source>
</reference>
<comment type="subcellular location">
    <subcellularLocation>
        <location evidence="2">Membrane</location>
        <topology evidence="2">Multi-pass membrane protein</topology>
    </subcellularLocation>
</comment>
<comment type="similarity">
    <text evidence="2">Belongs to the TMEM19 family.</text>
</comment>
<keyword id="KW-0472">Membrane</keyword>
<keyword id="KW-1185">Reference proteome</keyword>
<keyword id="KW-0812">Transmembrane</keyword>
<keyword id="KW-1133">Transmembrane helix</keyword>
<protein>
    <recommendedName>
        <fullName>Transmembrane protein 19</fullName>
    </recommendedName>
</protein>
<name>TMM19_RAT</name>
<feature type="chain" id="PRO_0000284797" description="Transmembrane protein 19">
    <location>
        <begin position="1"/>
        <end position="351"/>
    </location>
</feature>
<feature type="transmembrane region" description="Helical" evidence="1">
    <location>
        <begin position="30"/>
        <end position="50"/>
    </location>
</feature>
<feature type="transmembrane region" description="Helical" evidence="1">
    <location>
        <begin position="64"/>
        <end position="84"/>
    </location>
</feature>
<feature type="transmembrane region" description="Helical" evidence="1">
    <location>
        <begin position="99"/>
        <end position="119"/>
    </location>
</feature>
<feature type="transmembrane region" description="Helical" evidence="1">
    <location>
        <begin position="233"/>
        <end position="253"/>
    </location>
</feature>
<feature type="transmembrane region" description="Helical" evidence="1">
    <location>
        <begin position="272"/>
        <end position="292"/>
    </location>
</feature>
<feature type="transmembrane region" description="Helical" evidence="1">
    <location>
        <begin position="328"/>
        <end position="348"/>
    </location>
</feature>
<gene>
    <name type="primary">Tmem19</name>
</gene>
<dbReference type="EMBL" id="BC061871">
    <property type="protein sequence ID" value="AAH61871.1"/>
    <property type="molecule type" value="mRNA"/>
</dbReference>
<dbReference type="RefSeq" id="NP_954529.1">
    <property type="nucleotide sequence ID" value="NM_199098.1"/>
</dbReference>
<dbReference type="FunCoup" id="Q6P726">
    <property type="interactions" value="945"/>
</dbReference>
<dbReference type="STRING" id="10116.ENSRNOP00000074140"/>
<dbReference type="iPTMnet" id="Q6P726"/>
<dbReference type="PhosphoSitePlus" id="Q6P726"/>
<dbReference type="PaxDb" id="10116-ENSRNOP00000005310"/>
<dbReference type="GeneID" id="299800"/>
<dbReference type="KEGG" id="rno:299800"/>
<dbReference type="AGR" id="RGD:735209"/>
<dbReference type="CTD" id="55266"/>
<dbReference type="RGD" id="735209">
    <property type="gene designation" value="Tmem19"/>
</dbReference>
<dbReference type="eggNOG" id="KOG4491">
    <property type="taxonomic scope" value="Eukaryota"/>
</dbReference>
<dbReference type="HOGENOM" id="CLU_036918_3_1_1"/>
<dbReference type="InParanoid" id="Q6P726"/>
<dbReference type="OrthoDB" id="30881at2759"/>
<dbReference type="PhylomeDB" id="Q6P726"/>
<dbReference type="TreeFam" id="TF300063"/>
<dbReference type="PRO" id="PR:Q6P726"/>
<dbReference type="Proteomes" id="UP000002494">
    <property type="component" value="Unplaced"/>
</dbReference>
<dbReference type="GO" id="GO:0016020">
    <property type="term" value="C:membrane"/>
    <property type="evidence" value="ECO:0000318"/>
    <property type="project" value="GO_Central"/>
</dbReference>
<dbReference type="InterPro" id="IPR002794">
    <property type="entry name" value="DUF92_TMEM19"/>
</dbReference>
<dbReference type="PANTHER" id="PTHR13353">
    <property type="entry name" value="TRANSMEMBRANE PROTEIN 19"/>
    <property type="match status" value="1"/>
</dbReference>
<dbReference type="PANTHER" id="PTHR13353:SF5">
    <property type="entry name" value="TRANSMEMBRANE PROTEIN 19"/>
    <property type="match status" value="1"/>
</dbReference>
<dbReference type="Pfam" id="PF01940">
    <property type="entry name" value="DUF92"/>
    <property type="match status" value="1"/>
</dbReference>
<proteinExistence type="evidence at transcript level"/>
<sequence>MLSIPSPQVLLALFSMTDLDDSTCKKYIKMITNIVILSLIICISLAFWIMSMTASTYYGSLRPVSPWRWLFSVVVSVVISCNGFKKKSLDHSGALGGLVVGFILTIANFSFFTSLLMFFLTSSKLTKWRGEMKKRLDSEYKEGGQRNWVQVFCNGGVPTELALLYMIENGPGEMPIDFAKQHTASWMCLSLLAALASSAGDTWASEVAPVLSKSSPRLITTWEKVPVGTNGGVTAVGLVSSLLGGTFVGLAYFLTQLVFVNDLDISAPQWPLIAFGGLAGLLGSIVDSFLGATMQFSGLDESTGLVVSSPTQETKHISGKPILDNNAVNLFSSVLVALLLPTAASGFWPTV</sequence>
<organism>
    <name type="scientific">Rattus norvegicus</name>
    <name type="common">Rat</name>
    <dbReference type="NCBI Taxonomy" id="10116"/>
    <lineage>
        <taxon>Eukaryota</taxon>
        <taxon>Metazoa</taxon>
        <taxon>Chordata</taxon>
        <taxon>Craniata</taxon>
        <taxon>Vertebrata</taxon>
        <taxon>Euteleostomi</taxon>
        <taxon>Mammalia</taxon>
        <taxon>Eutheria</taxon>
        <taxon>Euarchontoglires</taxon>
        <taxon>Glires</taxon>
        <taxon>Rodentia</taxon>
        <taxon>Myomorpha</taxon>
        <taxon>Muroidea</taxon>
        <taxon>Muridae</taxon>
        <taxon>Murinae</taxon>
        <taxon>Rattus</taxon>
    </lineage>
</organism>
<accession>Q6P726</accession>